<proteinExistence type="inferred from homology"/>
<name>PYRI_METMP</name>
<reference key="1">
    <citation type="journal article" date="2004" name="J. Bacteriol.">
        <title>Complete genome sequence of the genetically tractable hydrogenotrophic methanogen Methanococcus maripaludis.</title>
        <authorList>
            <person name="Hendrickson E.L."/>
            <person name="Kaul R."/>
            <person name="Zhou Y."/>
            <person name="Bovee D."/>
            <person name="Chapman P."/>
            <person name="Chung J."/>
            <person name="Conway de Macario E."/>
            <person name="Dodsworth J.A."/>
            <person name="Gillett W."/>
            <person name="Graham D.E."/>
            <person name="Hackett M."/>
            <person name="Haydock A.K."/>
            <person name="Kang A."/>
            <person name="Land M.L."/>
            <person name="Levy R."/>
            <person name="Lie T.J."/>
            <person name="Major T.A."/>
            <person name="Moore B.C."/>
            <person name="Porat I."/>
            <person name="Palmeiri A."/>
            <person name="Rouse G."/>
            <person name="Saenphimmachak C."/>
            <person name="Soell D."/>
            <person name="Van Dien S."/>
            <person name="Wang T."/>
            <person name="Whitman W.B."/>
            <person name="Xia Q."/>
            <person name="Zhang Y."/>
            <person name="Larimer F.W."/>
            <person name="Olson M.V."/>
            <person name="Leigh J.A."/>
        </authorList>
    </citation>
    <scope>NUCLEOTIDE SEQUENCE [LARGE SCALE GENOMIC DNA]</scope>
    <source>
        <strain>DSM 14266 / JCM 13030 / NBRC 101832 / S2 / LL</strain>
    </source>
</reference>
<comment type="function">
    <text evidence="1">Involved in allosteric regulation of aspartate carbamoyltransferase.</text>
</comment>
<comment type="cofactor">
    <cofactor evidence="1">
        <name>Zn(2+)</name>
        <dbReference type="ChEBI" id="CHEBI:29105"/>
    </cofactor>
    <text evidence="1">Binds 1 zinc ion per subunit.</text>
</comment>
<comment type="subunit">
    <text evidence="1">Contains catalytic and regulatory chains.</text>
</comment>
<comment type="similarity">
    <text evidence="1">Belongs to the PyrI family.</text>
</comment>
<accession>Q6LY87</accession>
<sequence>MKRELKVKPIENGTVIDHISGSKALKVYKILNIEEKLPITLALNVPSKKGVTKDILKIEGLELSKDDVNKIALISPDATINIIKEGKVIKKFKVDIPKRIDGIIKCTNPNCITNKENIESRFSIEQKNTLKIRCEYCEKFINSIIISK</sequence>
<evidence type="ECO:0000255" key="1">
    <source>
        <dbReference type="HAMAP-Rule" id="MF_00002"/>
    </source>
</evidence>
<protein>
    <recommendedName>
        <fullName evidence="1">Aspartate carbamoyltransferase regulatory chain</fullName>
    </recommendedName>
</protein>
<gene>
    <name evidence="1" type="primary">pyrI</name>
    <name type="ordered locus">MMP1104</name>
</gene>
<organism>
    <name type="scientific">Methanococcus maripaludis (strain DSM 14266 / JCM 13030 / NBRC 101832 / S2 / LL)</name>
    <dbReference type="NCBI Taxonomy" id="267377"/>
    <lineage>
        <taxon>Archaea</taxon>
        <taxon>Methanobacteriati</taxon>
        <taxon>Methanobacteriota</taxon>
        <taxon>Methanomada group</taxon>
        <taxon>Methanococci</taxon>
        <taxon>Methanococcales</taxon>
        <taxon>Methanococcaceae</taxon>
        <taxon>Methanococcus</taxon>
    </lineage>
</organism>
<feature type="chain" id="PRO_0000142334" description="Aspartate carbamoyltransferase regulatory chain">
    <location>
        <begin position="1"/>
        <end position="148"/>
    </location>
</feature>
<feature type="binding site" evidence="1">
    <location>
        <position position="106"/>
    </location>
    <ligand>
        <name>Zn(2+)</name>
        <dbReference type="ChEBI" id="CHEBI:29105"/>
    </ligand>
</feature>
<feature type="binding site" evidence="1">
    <location>
        <position position="111"/>
    </location>
    <ligand>
        <name>Zn(2+)</name>
        <dbReference type="ChEBI" id="CHEBI:29105"/>
    </ligand>
</feature>
<feature type="binding site" evidence="1">
    <location>
        <position position="134"/>
    </location>
    <ligand>
        <name>Zn(2+)</name>
        <dbReference type="ChEBI" id="CHEBI:29105"/>
    </ligand>
</feature>
<feature type="binding site" evidence="1">
    <location>
        <position position="137"/>
    </location>
    <ligand>
        <name>Zn(2+)</name>
        <dbReference type="ChEBI" id="CHEBI:29105"/>
    </ligand>
</feature>
<keyword id="KW-0479">Metal-binding</keyword>
<keyword id="KW-0665">Pyrimidine biosynthesis</keyword>
<keyword id="KW-1185">Reference proteome</keyword>
<keyword id="KW-0862">Zinc</keyword>
<dbReference type="EMBL" id="BX950229">
    <property type="protein sequence ID" value="CAF30660.1"/>
    <property type="molecule type" value="Genomic_DNA"/>
</dbReference>
<dbReference type="RefSeq" id="WP_011171048.1">
    <property type="nucleotide sequence ID" value="NC_005791.1"/>
</dbReference>
<dbReference type="SMR" id="Q6LY87"/>
<dbReference type="STRING" id="267377.MMP1104"/>
<dbReference type="EnsemblBacteria" id="CAF30660">
    <property type="protein sequence ID" value="CAF30660"/>
    <property type="gene ID" value="MMP1104"/>
</dbReference>
<dbReference type="GeneID" id="41279684"/>
<dbReference type="KEGG" id="mmp:MMP1104"/>
<dbReference type="PATRIC" id="fig|267377.15.peg.1137"/>
<dbReference type="eggNOG" id="arCOG04229">
    <property type="taxonomic scope" value="Archaea"/>
</dbReference>
<dbReference type="HOGENOM" id="CLU_128576_0_0_2"/>
<dbReference type="OrthoDB" id="7000at2157"/>
<dbReference type="Proteomes" id="UP000000590">
    <property type="component" value="Chromosome"/>
</dbReference>
<dbReference type="GO" id="GO:0009347">
    <property type="term" value="C:aspartate carbamoyltransferase complex"/>
    <property type="evidence" value="ECO:0007669"/>
    <property type="project" value="InterPro"/>
</dbReference>
<dbReference type="GO" id="GO:0046872">
    <property type="term" value="F:metal ion binding"/>
    <property type="evidence" value="ECO:0007669"/>
    <property type="project" value="UniProtKB-KW"/>
</dbReference>
<dbReference type="GO" id="GO:0006207">
    <property type="term" value="P:'de novo' pyrimidine nucleobase biosynthetic process"/>
    <property type="evidence" value="ECO:0007669"/>
    <property type="project" value="InterPro"/>
</dbReference>
<dbReference type="GO" id="GO:0006221">
    <property type="term" value="P:pyrimidine nucleotide biosynthetic process"/>
    <property type="evidence" value="ECO:0007669"/>
    <property type="project" value="UniProtKB-UniRule"/>
</dbReference>
<dbReference type="Gene3D" id="2.30.30.20">
    <property type="entry name" value="Aspartate carbamoyltransferase regulatory subunit, C-terminal domain"/>
    <property type="match status" value="1"/>
</dbReference>
<dbReference type="Gene3D" id="3.30.70.140">
    <property type="entry name" value="Aspartate carbamoyltransferase regulatory subunit, N-terminal domain"/>
    <property type="match status" value="1"/>
</dbReference>
<dbReference type="HAMAP" id="MF_00002">
    <property type="entry name" value="Asp_carb_tr_reg"/>
    <property type="match status" value="1"/>
</dbReference>
<dbReference type="InterPro" id="IPR020545">
    <property type="entry name" value="Asp_carbamoyltransf_reg_N"/>
</dbReference>
<dbReference type="InterPro" id="IPR002801">
    <property type="entry name" value="Asp_carbamoylTrfase_reg"/>
</dbReference>
<dbReference type="InterPro" id="IPR020542">
    <property type="entry name" value="Asp_carbamoyltrfase_reg_C"/>
</dbReference>
<dbReference type="InterPro" id="IPR036792">
    <property type="entry name" value="Asp_carbatrfase_reg_C_sf"/>
</dbReference>
<dbReference type="InterPro" id="IPR036793">
    <property type="entry name" value="Asp_carbatrfase_reg_N_sf"/>
</dbReference>
<dbReference type="NCBIfam" id="TIGR00240">
    <property type="entry name" value="ATCase_reg"/>
    <property type="match status" value="1"/>
</dbReference>
<dbReference type="PANTHER" id="PTHR35805">
    <property type="entry name" value="ASPARTATE CARBAMOYLTRANSFERASE REGULATORY CHAIN"/>
    <property type="match status" value="1"/>
</dbReference>
<dbReference type="PANTHER" id="PTHR35805:SF1">
    <property type="entry name" value="ASPARTATE CARBAMOYLTRANSFERASE REGULATORY CHAIN"/>
    <property type="match status" value="1"/>
</dbReference>
<dbReference type="Pfam" id="PF01948">
    <property type="entry name" value="PyrI"/>
    <property type="match status" value="1"/>
</dbReference>
<dbReference type="Pfam" id="PF02748">
    <property type="entry name" value="PyrI_C"/>
    <property type="match status" value="1"/>
</dbReference>
<dbReference type="SUPFAM" id="SSF57825">
    <property type="entry name" value="Aspartate carbamoyltransferase, Regulatory-chain, C-terminal domain"/>
    <property type="match status" value="1"/>
</dbReference>
<dbReference type="SUPFAM" id="SSF54893">
    <property type="entry name" value="Aspartate carbamoyltransferase, Regulatory-chain, N-terminal domain"/>
    <property type="match status" value="1"/>
</dbReference>